<protein>
    <recommendedName>
        <fullName>U3 small nucleolar RNA-associated protein 25</fullName>
        <shortName>U3 snoRNA-associated protein 25</shortName>
    </recommendedName>
    <alternativeName>
        <fullName>U three protein 25</fullName>
    </alternativeName>
</protein>
<dbReference type="EMBL" id="CU329672">
    <property type="protein sequence ID" value="CAA19309.1"/>
    <property type="molecule type" value="Genomic_DNA"/>
</dbReference>
<dbReference type="PIR" id="T41162">
    <property type="entry name" value="T41162"/>
</dbReference>
<dbReference type="RefSeq" id="NP_588547.1">
    <property type="nucleotide sequence ID" value="NM_001023534.2"/>
</dbReference>
<dbReference type="SMR" id="O74974"/>
<dbReference type="BioGRID" id="275478">
    <property type="interactions" value="2"/>
</dbReference>
<dbReference type="FunCoup" id="O74974">
    <property type="interactions" value="839"/>
</dbReference>
<dbReference type="STRING" id="284812.O74974"/>
<dbReference type="iPTMnet" id="O74974"/>
<dbReference type="PaxDb" id="4896-SPCC1827.01c.1"/>
<dbReference type="EnsemblFungi" id="SPCC1827.01c.1">
    <property type="protein sequence ID" value="SPCC1827.01c.1:pep"/>
    <property type="gene ID" value="SPCC1827.01c"/>
</dbReference>
<dbReference type="GeneID" id="2538900"/>
<dbReference type="KEGG" id="spo:2538900"/>
<dbReference type="PomBase" id="SPCC1827.01c">
    <property type="gene designation" value="utp25"/>
</dbReference>
<dbReference type="VEuPathDB" id="FungiDB:SPCC1827.01c"/>
<dbReference type="eggNOG" id="KOG2340">
    <property type="taxonomic scope" value="Eukaryota"/>
</dbReference>
<dbReference type="HOGENOM" id="CLU_018705_0_1_1"/>
<dbReference type="InParanoid" id="O74974"/>
<dbReference type="OMA" id="GIMIFIP"/>
<dbReference type="PhylomeDB" id="O74974"/>
<dbReference type="Reactome" id="R-SPO-6791226">
    <property type="pathway name" value="Major pathway of rRNA processing in the nucleolus and cytosol"/>
</dbReference>
<dbReference type="PRO" id="PR:O74974"/>
<dbReference type="Proteomes" id="UP000002485">
    <property type="component" value="Chromosome III"/>
</dbReference>
<dbReference type="GO" id="GO:0005730">
    <property type="term" value="C:nucleolus"/>
    <property type="evidence" value="ECO:0000318"/>
    <property type="project" value="GO_Central"/>
</dbReference>
<dbReference type="GO" id="GO:0005634">
    <property type="term" value="C:nucleus"/>
    <property type="evidence" value="ECO:0007005"/>
    <property type="project" value="PomBase"/>
</dbReference>
<dbReference type="GO" id="GO:0032040">
    <property type="term" value="C:small-subunit processome"/>
    <property type="evidence" value="ECO:0000318"/>
    <property type="project" value="GO_Central"/>
</dbReference>
<dbReference type="GO" id="GO:0019843">
    <property type="term" value="F:rRNA binding"/>
    <property type="evidence" value="ECO:0000318"/>
    <property type="project" value="GO_Central"/>
</dbReference>
<dbReference type="GO" id="GO:0034511">
    <property type="term" value="F:U3 snoRNA binding"/>
    <property type="evidence" value="ECO:0000318"/>
    <property type="project" value="GO_Central"/>
</dbReference>
<dbReference type="GO" id="GO:0000462">
    <property type="term" value="P:maturation of SSU-rRNA from tricistronic rRNA transcript (SSU-rRNA, 5.8S rRNA, LSU-rRNA)"/>
    <property type="evidence" value="ECO:0000318"/>
    <property type="project" value="GO_Central"/>
</dbReference>
<dbReference type="FunFam" id="3.40.50.300:FF:002356">
    <property type="entry name" value="U3 small nucleolar RNA-associated protein 25"/>
    <property type="match status" value="1"/>
</dbReference>
<dbReference type="Gene3D" id="3.40.50.300">
    <property type="entry name" value="P-loop containing nucleotide triphosphate hydrolases"/>
    <property type="match status" value="2"/>
</dbReference>
<dbReference type="InterPro" id="IPR027417">
    <property type="entry name" value="P-loop_NTPase"/>
</dbReference>
<dbReference type="InterPro" id="IPR010678">
    <property type="entry name" value="UTP25"/>
</dbReference>
<dbReference type="InterPro" id="IPR053939">
    <property type="entry name" value="UTP25_C"/>
</dbReference>
<dbReference type="InterPro" id="IPR053940">
    <property type="entry name" value="UTP25_NTPase-like"/>
</dbReference>
<dbReference type="PANTHER" id="PTHR12933">
    <property type="entry name" value="ORF PROTEIN-RELATED"/>
    <property type="match status" value="1"/>
</dbReference>
<dbReference type="PANTHER" id="PTHR12933:SF0">
    <property type="entry name" value="U3 SMALL NUCLEOLAR RNA-ASSOCIATED PROTEIN 25 HOMOLOG"/>
    <property type="match status" value="1"/>
</dbReference>
<dbReference type="Pfam" id="PF06862">
    <property type="entry name" value="Utp25_C"/>
    <property type="match status" value="1"/>
</dbReference>
<dbReference type="Pfam" id="PF22916">
    <property type="entry name" value="UTP25_NTPase-like"/>
    <property type="match status" value="1"/>
</dbReference>
<dbReference type="SUPFAM" id="SSF52540">
    <property type="entry name" value="P-loop containing nucleoside triphosphate hydrolases"/>
    <property type="match status" value="1"/>
</dbReference>
<proteinExistence type="inferred from homology"/>
<gene>
    <name type="primary">utp25</name>
    <name type="ORF">SPCC1827.01c</name>
</gene>
<reference key="1">
    <citation type="journal article" date="2002" name="Nature">
        <title>The genome sequence of Schizosaccharomyces pombe.</title>
        <authorList>
            <person name="Wood V."/>
            <person name="Gwilliam R."/>
            <person name="Rajandream M.A."/>
            <person name="Lyne M.H."/>
            <person name="Lyne R."/>
            <person name="Stewart A."/>
            <person name="Sgouros J.G."/>
            <person name="Peat N."/>
            <person name="Hayles J."/>
            <person name="Baker S.G."/>
            <person name="Basham D."/>
            <person name="Bowman S."/>
            <person name="Brooks K."/>
            <person name="Brown D."/>
            <person name="Brown S."/>
            <person name="Chillingworth T."/>
            <person name="Churcher C.M."/>
            <person name="Collins M."/>
            <person name="Connor R."/>
            <person name="Cronin A."/>
            <person name="Davis P."/>
            <person name="Feltwell T."/>
            <person name="Fraser A."/>
            <person name="Gentles S."/>
            <person name="Goble A."/>
            <person name="Hamlin N."/>
            <person name="Harris D.E."/>
            <person name="Hidalgo J."/>
            <person name="Hodgson G."/>
            <person name="Holroyd S."/>
            <person name="Hornsby T."/>
            <person name="Howarth S."/>
            <person name="Huckle E.J."/>
            <person name="Hunt S."/>
            <person name="Jagels K."/>
            <person name="James K.D."/>
            <person name="Jones L."/>
            <person name="Jones M."/>
            <person name="Leather S."/>
            <person name="McDonald S."/>
            <person name="McLean J."/>
            <person name="Mooney P."/>
            <person name="Moule S."/>
            <person name="Mungall K.L."/>
            <person name="Murphy L.D."/>
            <person name="Niblett D."/>
            <person name="Odell C."/>
            <person name="Oliver K."/>
            <person name="O'Neil S."/>
            <person name="Pearson D."/>
            <person name="Quail M.A."/>
            <person name="Rabbinowitsch E."/>
            <person name="Rutherford K.M."/>
            <person name="Rutter S."/>
            <person name="Saunders D."/>
            <person name="Seeger K."/>
            <person name="Sharp S."/>
            <person name="Skelton J."/>
            <person name="Simmonds M.N."/>
            <person name="Squares R."/>
            <person name="Squares S."/>
            <person name="Stevens K."/>
            <person name="Taylor K."/>
            <person name="Taylor R.G."/>
            <person name="Tivey A."/>
            <person name="Walsh S.V."/>
            <person name="Warren T."/>
            <person name="Whitehead S."/>
            <person name="Woodward J.R."/>
            <person name="Volckaert G."/>
            <person name="Aert R."/>
            <person name="Robben J."/>
            <person name="Grymonprez B."/>
            <person name="Weltjens I."/>
            <person name="Vanstreels E."/>
            <person name="Rieger M."/>
            <person name="Schaefer M."/>
            <person name="Mueller-Auer S."/>
            <person name="Gabel C."/>
            <person name="Fuchs M."/>
            <person name="Duesterhoeft A."/>
            <person name="Fritzc C."/>
            <person name="Holzer E."/>
            <person name="Moestl D."/>
            <person name="Hilbert H."/>
            <person name="Borzym K."/>
            <person name="Langer I."/>
            <person name="Beck A."/>
            <person name="Lehrach H."/>
            <person name="Reinhardt R."/>
            <person name="Pohl T.M."/>
            <person name="Eger P."/>
            <person name="Zimmermann W."/>
            <person name="Wedler H."/>
            <person name="Wambutt R."/>
            <person name="Purnelle B."/>
            <person name="Goffeau A."/>
            <person name="Cadieu E."/>
            <person name="Dreano S."/>
            <person name="Gloux S."/>
            <person name="Lelaure V."/>
            <person name="Mottier S."/>
            <person name="Galibert F."/>
            <person name="Aves S.J."/>
            <person name="Xiang Z."/>
            <person name="Hunt C."/>
            <person name="Moore K."/>
            <person name="Hurst S.M."/>
            <person name="Lucas M."/>
            <person name="Rochet M."/>
            <person name="Gaillardin C."/>
            <person name="Tallada V.A."/>
            <person name="Garzon A."/>
            <person name="Thode G."/>
            <person name="Daga R.R."/>
            <person name="Cruzado L."/>
            <person name="Jimenez J."/>
            <person name="Sanchez M."/>
            <person name="del Rey F."/>
            <person name="Benito J."/>
            <person name="Dominguez A."/>
            <person name="Revuelta J.L."/>
            <person name="Moreno S."/>
            <person name="Armstrong J."/>
            <person name="Forsburg S.L."/>
            <person name="Cerutti L."/>
            <person name="Lowe T."/>
            <person name="McCombie W.R."/>
            <person name="Paulsen I."/>
            <person name="Potashkin J."/>
            <person name="Shpakovski G.V."/>
            <person name="Ussery D."/>
            <person name="Barrell B.G."/>
            <person name="Nurse P."/>
        </authorList>
    </citation>
    <scope>NUCLEOTIDE SEQUENCE [LARGE SCALE GENOMIC DNA]</scope>
    <source>
        <strain>972 / ATCC 24843</strain>
    </source>
</reference>
<reference key="2">
    <citation type="journal article" date="2006" name="Nat. Biotechnol.">
        <title>ORFeome cloning and global analysis of protein localization in the fission yeast Schizosaccharomyces pombe.</title>
        <authorList>
            <person name="Matsuyama A."/>
            <person name="Arai R."/>
            <person name="Yashiroda Y."/>
            <person name="Shirai A."/>
            <person name="Kamata A."/>
            <person name="Sekido S."/>
            <person name="Kobayashi Y."/>
            <person name="Hashimoto A."/>
            <person name="Hamamoto M."/>
            <person name="Hiraoka Y."/>
            <person name="Horinouchi S."/>
            <person name="Yoshida M."/>
        </authorList>
    </citation>
    <scope>SUBCELLULAR LOCATION [LARGE SCALE ANALYSIS]</scope>
</reference>
<sequence>MAIESDLDGASMDELAGKSYEALLYLMNKNKKRKPEKKDDKEKSSKKVQKKNKVIESLNEMEVEMEDENENENDEQEAIQYYINVESQDADETLHQEAQDSSEDPFHQHFDYDDSEVIKNSIAAYDEGKLCKSIEESKLGVSQSFFPDVTKRLPCSCLSEIKNIDDLGLKQRILDSYKKQKPSGQLTSMQIELAKAMFNYQDVFFTNMSMKSHKLGTSLLALHALNHVFKTRDRVLKNSARISQNPELEFRDQGYTRPKVLILLPTRNSAFEFINLLISYSGTNQVENRKRFDNEFSIEKEVISEKKPEDFRYLFSGNTDDMFRLGVKFTRKTVKLFSQFYNSDIIVASPLGLRLAIGNKGDKKRDLDYLSSIEIAMVDQAHALVMQNWEHIECIFDELNGLPKEAHGCDFSRVRPWYLDQQARYMRQTILFSQYNNLDINSFFSHYMSNIAGKVKFRSLLHGVLNRLGYKVTQTFVRISVDSIIKVPDARFSYFTGSILVQLKKYSQSGILVYIPSYFDFVRVRNYMDEEGINYSAISEYSSVSDMTRARNLFYQGRTNIMLYTERAHHFRRFDFRGVKAVVMYGPPTNPQFYVELVRMPMRTISEGNLDSDAAKCRIMYTKFDSICLEGIVGYQRVSNMCHGKHEVFEFL</sequence>
<organism>
    <name type="scientific">Schizosaccharomyces pombe (strain 972 / ATCC 24843)</name>
    <name type="common">Fission yeast</name>
    <dbReference type="NCBI Taxonomy" id="284812"/>
    <lineage>
        <taxon>Eukaryota</taxon>
        <taxon>Fungi</taxon>
        <taxon>Dikarya</taxon>
        <taxon>Ascomycota</taxon>
        <taxon>Taphrinomycotina</taxon>
        <taxon>Schizosaccharomycetes</taxon>
        <taxon>Schizosaccharomycetales</taxon>
        <taxon>Schizosaccharomycetaceae</taxon>
        <taxon>Schizosaccharomyces</taxon>
    </lineage>
</organism>
<name>UTP25_SCHPO</name>
<keyword id="KW-0539">Nucleus</keyword>
<keyword id="KW-1185">Reference proteome</keyword>
<keyword id="KW-0687">Ribonucleoprotein</keyword>
<keyword id="KW-0690">Ribosome biogenesis</keyword>
<keyword id="KW-0698">rRNA processing</keyword>
<feature type="chain" id="PRO_0000372381" description="U3 small nucleolar RNA-associated protein 25">
    <location>
        <begin position="1"/>
        <end position="652"/>
    </location>
</feature>
<feature type="region of interest" description="Disordered" evidence="2">
    <location>
        <begin position="29"/>
        <end position="74"/>
    </location>
</feature>
<feature type="compositionally biased region" description="Basic and acidic residues" evidence="2">
    <location>
        <begin position="36"/>
        <end position="45"/>
    </location>
</feature>
<feature type="compositionally biased region" description="Acidic residues" evidence="2">
    <location>
        <begin position="59"/>
        <end position="74"/>
    </location>
</feature>
<evidence type="ECO:0000250" key="1"/>
<evidence type="ECO:0000256" key="2">
    <source>
        <dbReference type="SAM" id="MobiDB-lite"/>
    </source>
</evidence>
<evidence type="ECO:0000269" key="3">
    <source>
    </source>
</evidence>
<evidence type="ECO:0000305" key="4"/>
<accession>O74974</accession>
<comment type="function">
    <text evidence="1">DEAD-box RNA helicase-like protein required for pre-18S rRNA processing, specifically at sites A0, A1, and A2.</text>
</comment>
<comment type="subunit">
    <text evidence="1">Component of the ribosomal small subunit (SSU) processome composed of at least 40 protein subunits and snoRNA U3.</text>
</comment>
<comment type="subcellular location">
    <subcellularLocation>
        <location evidence="3">Nucleus</location>
        <location evidence="3">Nucleolus</location>
    </subcellularLocation>
</comment>
<comment type="similarity">
    <text evidence="4">Belongs to the UTP25 family.</text>
</comment>